<name>PEDI_HYDVU</name>
<dbReference type="Proteomes" id="UP000694840">
    <property type="component" value="Unplaced"/>
</dbReference>
<dbReference type="GO" id="GO:0016015">
    <property type="term" value="F:morphogen activity"/>
    <property type="evidence" value="ECO:0007669"/>
    <property type="project" value="UniProtKB-KW"/>
</dbReference>
<dbReference type="GO" id="GO:0009653">
    <property type="term" value="P:anatomical structure morphogenesis"/>
    <property type="evidence" value="ECO:0007669"/>
    <property type="project" value="UniProtKB-KW"/>
</dbReference>
<feature type="peptide" id="PRO_0000044201" description="Pedin">
    <location>
        <begin position="1"/>
        <end position="13"/>
    </location>
</feature>
<organism>
    <name type="scientific">Hydra vulgaris</name>
    <name type="common">Hydra</name>
    <name type="synonym">Hydra attenuata</name>
    <dbReference type="NCBI Taxonomy" id="6087"/>
    <lineage>
        <taxon>Eukaryota</taxon>
        <taxon>Metazoa</taxon>
        <taxon>Cnidaria</taxon>
        <taxon>Hydrozoa</taxon>
        <taxon>Hydroidolina</taxon>
        <taxon>Anthoathecata</taxon>
        <taxon>Aplanulata</taxon>
        <taxon>Hydridae</taxon>
        <taxon>Hydra</taxon>
    </lineage>
</organism>
<proteinExistence type="evidence at protein level"/>
<sequence>EELRPEVLPDVSE</sequence>
<accession>P80578</accession>
<reference key="1">
    <citation type="journal article" date="1996" name="Development">
        <title>Isolation and characterization of two new morphogenetically active peptides from Hydra vulgaris.</title>
        <authorList>
            <person name="Hoffmeister S.A.H."/>
        </authorList>
    </citation>
    <scope>PROTEIN SEQUENCE</scope>
</reference>
<protein>
    <recommendedName>
        <fullName>Pedin</fullName>
    </recommendedName>
</protein>
<keyword id="KW-0903">Direct protein sequencing</keyword>
<keyword id="KW-0504">Morphogen</keyword>
<keyword id="KW-1185">Reference proteome</keyword>
<comment type="function">
    <text>Morphogenetically active peptide. Active in foot development.</text>
</comment>